<dbReference type="EMBL" id="CP000023">
    <property type="protein sequence ID" value="AAV61555.1"/>
    <property type="status" value="ALT_INIT"/>
    <property type="molecule type" value="Genomic_DNA"/>
</dbReference>
<dbReference type="RefSeq" id="WP_011681733.1">
    <property type="nucleotide sequence ID" value="NC_006448.1"/>
</dbReference>
<dbReference type="STRING" id="264199.stu1961"/>
<dbReference type="KEGG" id="stl:stu1961"/>
<dbReference type="eggNOG" id="COG3906">
    <property type="taxonomic scope" value="Bacteria"/>
</dbReference>
<dbReference type="HOGENOM" id="CLU_146610_2_1_9"/>
<dbReference type="Proteomes" id="UP000001170">
    <property type="component" value="Chromosome"/>
</dbReference>
<dbReference type="HAMAP" id="MF_01448">
    <property type="entry name" value="UPF0473"/>
    <property type="match status" value="1"/>
</dbReference>
<dbReference type="InterPro" id="IPR009711">
    <property type="entry name" value="UPF0473"/>
</dbReference>
<dbReference type="NCBIfam" id="NF010215">
    <property type="entry name" value="PRK13678.1-2"/>
    <property type="match status" value="1"/>
</dbReference>
<dbReference type="NCBIfam" id="NF010217">
    <property type="entry name" value="PRK13678.1-4"/>
    <property type="match status" value="1"/>
</dbReference>
<dbReference type="PANTHER" id="PTHR40066">
    <property type="entry name" value="UPF0473 PROTEIN CBO2561/CLC_2432"/>
    <property type="match status" value="1"/>
</dbReference>
<dbReference type="PANTHER" id="PTHR40066:SF1">
    <property type="entry name" value="UPF0473 PROTEIN CBO2561_CLC_2432"/>
    <property type="match status" value="1"/>
</dbReference>
<dbReference type="Pfam" id="PF06949">
    <property type="entry name" value="DUF1292"/>
    <property type="match status" value="1"/>
</dbReference>
<accession>Q5M291</accession>
<keyword id="KW-1185">Reference proteome</keyword>
<name>Y1961_STRT2</name>
<comment type="similarity">
    <text evidence="1">Belongs to the UPF0473 family.</text>
</comment>
<comment type="sequence caution" evidence="2">
    <conflict type="erroneous initiation">
        <sequence resource="EMBL-CDS" id="AAV61555"/>
    </conflict>
</comment>
<reference key="1">
    <citation type="journal article" date="2004" name="Nat. Biotechnol.">
        <title>Complete sequence and comparative genome analysis of the dairy bacterium Streptococcus thermophilus.</title>
        <authorList>
            <person name="Bolotin A."/>
            <person name="Quinquis B."/>
            <person name="Renault P."/>
            <person name="Sorokin A."/>
            <person name="Ehrlich S.D."/>
            <person name="Kulakauskas S."/>
            <person name="Lapidus A."/>
            <person name="Goltsman E."/>
            <person name="Mazur M."/>
            <person name="Pusch G.D."/>
            <person name="Fonstein M."/>
            <person name="Overbeek R."/>
            <person name="Kyprides N."/>
            <person name="Purnelle B."/>
            <person name="Prozzi D."/>
            <person name="Ngui K."/>
            <person name="Masuy D."/>
            <person name="Hancy F."/>
            <person name="Burteau S."/>
            <person name="Boutry M."/>
            <person name="Delcour J."/>
            <person name="Goffeau A."/>
            <person name="Hols P."/>
        </authorList>
    </citation>
    <scope>NUCLEOTIDE SEQUENCE [LARGE SCALE GENOMIC DNA]</scope>
    <source>
        <strain>ATCC BAA-250 / LMG 18311</strain>
    </source>
</reference>
<proteinExistence type="inferred from homology"/>
<evidence type="ECO:0000255" key="1">
    <source>
        <dbReference type="HAMAP-Rule" id="MF_01448"/>
    </source>
</evidence>
<evidence type="ECO:0000305" key="2"/>
<sequence>MSHNHDHNHDHEVITLVDEQGNETLFEILLTIDGREEFGKNYVLLVPAGAEEDADGEIEIQAYSFTENEDGTEGDLQPIPEDSDAEWDMIEEVFNSFIDEN</sequence>
<organism>
    <name type="scientific">Streptococcus thermophilus (strain ATCC BAA-250 / LMG 18311)</name>
    <dbReference type="NCBI Taxonomy" id="264199"/>
    <lineage>
        <taxon>Bacteria</taxon>
        <taxon>Bacillati</taxon>
        <taxon>Bacillota</taxon>
        <taxon>Bacilli</taxon>
        <taxon>Lactobacillales</taxon>
        <taxon>Streptococcaceae</taxon>
        <taxon>Streptococcus</taxon>
    </lineage>
</organism>
<protein>
    <recommendedName>
        <fullName evidence="1">UPF0473 protein stu1961</fullName>
    </recommendedName>
</protein>
<gene>
    <name type="ordered locus">stu1961</name>
</gene>
<feature type="chain" id="PRO_0000304872" description="UPF0473 protein stu1961">
    <location>
        <begin position="1"/>
        <end position="101"/>
    </location>
</feature>